<feature type="chain" id="PRO_1000091888" description="3-deoxy-manno-octulosonate cytidylyltransferase">
    <location>
        <begin position="1"/>
        <end position="254"/>
    </location>
</feature>
<organism>
    <name type="scientific">Pseudomonas paraeruginosa (strain DSM 24068 / PA7)</name>
    <name type="common">Pseudomonas aeruginosa (strain PA7)</name>
    <dbReference type="NCBI Taxonomy" id="381754"/>
    <lineage>
        <taxon>Bacteria</taxon>
        <taxon>Pseudomonadati</taxon>
        <taxon>Pseudomonadota</taxon>
        <taxon>Gammaproteobacteria</taxon>
        <taxon>Pseudomonadales</taxon>
        <taxon>Pseudomonadaceae</taxon>
        <taxon>Pseudomonas</taxon>
        <taxon>Pseudomonas paraeruginosa</taxon>
    </lineage>
</organism>
<comment type="function">
    <text evidence="1">Activates KDO (a required 8-carbon sugar) for incorporation into bacterial lipopolysaccharide in Gram-negative bacteria.</text>
</comment>
<comment type="catalytic activity">
    <reaction evidence="1">
        <text>3-deoxy-alpha-D-manno-oct-2-ulosonate + CTP = CMP-3-deoxy-beta-D-manno-octulosonate + diphosphate</text>
        <dbReference type="Rhea" id="RHEA:23448"/>
        <dbReference type="ChEBI" id="CHEBI:33019"/>
        <dbReference type="ChEBI" id="CHEBI:37563"/>
        <dbReference type="ChEBI" id="CHEBI:85986"/>
        <dbReference type="ChEBI" id="CHEBI:85987"/>
        <dbReference type="EC" id="2.7.7.38"/>
    </reaction>
</comment>
<comment type="pathway">
    <text evidence="1">Nucleotide-sugar biosynthesis; CMP-3-deoxy-D-manno-octulosonate biosynthesis; CMP-3-deoxy-D-manno-octulosonate from 3-deoxy-D-manno-octulosonate and CTP: step 1/1.</text>
</comment>
<comment type="pathway">
    <text evidence="1">Bacterial outer membrane biogenesis; lipopolysaccharide biosynthesis.</text>
</comment>
<comment type="subcellular location">
    <subcellularLocation>
        <location evidence="1">Cytoplasm</location>
    </subcellularLocation>
</comment>
<comment type="similarity">
    <text evidence="1">Belongs to the KdsB family.</text>
</comment>
<protein>
    <recommendedName>
        <fullName evidence="1">3-deoxy-manno-octulosonate cytidylyltransferase</fullName>
        <ecNumber evidence="1">2.7.7.38</ecNumber>
    </recommendedName>
    <alternativeName>
        <fullName evidence="1">CMP-2-keto-3-deoxyoctulosonic acid synthase</fullName>
        <shortName evidence="1">CKS</shortName>
        <shortName evidence="1">CMP-KDO synthase</shortName>
    </alternativeName>
</protein>
<dbReference type="EC" id="2.7.7.38" evidence="1"/>
<dbReference type="EMBL" id="CP000744">
    <property type="protein sequence ID" value="ABR85112.1"/>
    <property type="molecule type" value="Genomic_DNA"/>
</dbReference>
<dbReference type="RefSeq" id="WP_012075164.1">
    <property type="nucleotide sequence ID" value="NC_009656.1"/>
</dbReference>
<dbReference type="SMR" id="A6V3B9"/>
<dbReference type="GeneID" id="77220530"/>
<dbReference type="KEGG" id="pap:PSPA7_2182"/>
<dbReference type="HOGENOM" id="CLU_065038_1_0_6"/>
<dbReference type="UniPathway" id="UPA00030"/>
<dbReference type="UniPathway" id="UPA00358">
    <property type="reaction ID" value="UER00476"/>
</dbReference>
<dbReference type="Proteomes" id="UP000001582">
    <property type="component" value="Chromosome"/>
</dbReference>
<dbReference type="GO" id="GO:0005829">
    <property type="term" value="C:cytosol"/>
    <property type="evidence" value="ECO:0007669"/>
    <property type="project" value="TreeGrafter"/>
</dbReference>
<dbReference type="GO" id="GO:0008690">
    <property type="term" value="F:3-deoxy-manno-octulosonate cytidylyltransferase activity"/>
    <property type="evidence" value="ECO:0007669"/>
    <property type="project" value="UniProtKB-UniRule"/>
</dbReference>
<dbReference type="GO" id="GO:0033468">
    <property type="term" value="P:CMP-keto-3-deoxy-D-manno-octulosonic acid biosynthetic process"/>
    <property type="evidence" value="ECO:0007669"/>
    <property type="project" value="UniProtKB-UniRule"/>
</dbReference>
<dbReference type="GO" id="GO:0009103">
    <property type="term" value="P:lipopolysaccharide biosynthetic process"/>
    <property type="evidence" value="ECO:0007669"/>
    <property type="project" value="UniProtKB-UniRule"/>
</dbReference>
<dbReference type="CDD" id="cd02517">
    <property type="entry name" value="CMP-KDO-Synthetase"/>
    <property type="match status" value="1"/>
</dbReference>
<dbReference type="FunFam" id="3.90.550.10:FF:000011">
    <property type="entry name" value="3-deoxy-manno-octulosonate cytidylyltransferase"/>
    <property type="match status" value="1"/>
</dbReference>
<dbReference type="Gene3D" id="3.90.550.10">
    <property type="entry name" value="Spore Coat Polysaccharide Biosynthesis Protein SpsA, Chain A"/>
    <property type="match status" value="1"/>
</dbReference>
<dbReference type="HAMAP" id="MF_00057">
    <property type="entry name" value="KdsB"/>
    <property type="match status" value="1"/>
</dbReference>
<dbReference type="InterPro" id="IPR003329">
    <property type="entry name" value="Cytidylyl_trans"/>
</dbReference>
<dbReference type="InterPro" id="IPR004528">
    <property type="entry name" value="KdsB"/>
</dbReference>
<dbReference type="InterPro" id="IPR029044">
    <property type="entry name" value="Nucleotide-diphossugar_trans"/>
</dbReference>
<dbReference type="NCBIfam" id="TIGR00466">
    <property type="entry name" value="kdsB"/>
    <property type="match status" value="1"/>
</dbReference>
<dbReference type="NCBIfam" id="NF003950">
    <property type="entry name" value="PRK05450.1-3"/>
    <property type="match status" value="1"/>
</dbReference>
<dbReference type="NCBIfam" id="NF003952">
    <property type="entry name" value="PRK05450.1-5"/>
    <property type="match status" value="1"/>
</dbReference>
<dbReference type="NCBIfam" id="NF009905">
    <property type="entry name" value="PRK13368.1"/>
    <property type="match status" value="1"/>
</dbReference>
<dbReference type="PANTHER" id="PTHR42866">
    <property type="entry name" value="3-DEOXY-MANNO-OCTULOSONATE CYTIDYLYLTRANSFERASE"/>
    <property type="match status" value="1"/>
</dbReference>
<dbReference type="PANTHER" id="PTHR42866:SF2">
    <property type="entry name" value="3-DEOXY-MANNO-OCTULOSONATE CYTIDYLYLTRANSFERASE, MITOCHONDRIAL"/>
    <property type="match status" value="1"/>
</dbReference>
<dbReference type="Pfam" id="PF02348">
    <property type="entry name" value="CTP_transf_3"/>
    <property type="match status" value="1"/>
</dbReference>
<dbReference type="SUPFAM" id="SSF53448">
    <property type="entry name" value="Nucleotide-diphospho-sugar transferases"/>
    <property type="match status" value="1"/>
</dbReference>
<proteinExistence type="inferred from homology"/>
<keyword id="KW-0963">Cytoplasm</keyword>
<keyword id="KW-0448">Lipopolysaccharide biosynthesis</keyword>
<keyword id="KW-0548">Nucleotidyltransferase</keyword>
<keyword id="KW-0808">Transferase</keyword>
<reference key="1">
    <citation type="submission" date="2007-06" db="EMBL/GenBank/DDBJ databases">
        <authorList>
            <person name="Dodson R.J."/>
            <person name="Harkins D."/>
            <person name="Paulsen I.T."/>
        </authorList>
    </citation>
    <scope>NUCLEOTIDE SEQUENCE [LARGE SCALE GENOMIC DNA]</scope>
    <source>
        <strain>DSM 24068 / PA7</strain>
    </source>
</reference>
<name>KDSB_PSEP7</name>
<evidence type="ECO:0000255" key="1">
    <source>
        <dbReference type="HAMAP-Rule" id="MF_00057"/>
    </source>
</evidence>
<gene>
    <name evidence="1" type="primary">kdsB</name>
    <name type="ordered locus">PSPA7_2182</name>
</gene>
<sequence length="254" mass="27533">MTQAFTVVIPARYASTRLPGKPLQDIAGQPMIQRVWNQARKSAASRVVIATDDERILAACQGFGAEVLLTRADHNSGTDRLEEVASRLGLAADAIVVNVQGDEPLIPPALIDQVAANLAAHPESAIATLAEPIHDVAALFNPNVVKVATDVNGLALTFSRAPLPWARDAFAGDRDSLPDGVPYRRHIGIYAYRVGFLADFVAWGPCWLENTESLEQLRALWHGVRIHVADARETMLPGVDTPEDLERVRRVLGG</sequence>
<accession>A6V3B9</accession>